<dbReference type="EC" id="2.3.1.234" evidence="1"/>
<dbReference type="EMBL" id="CP000036">
    <property type="protein sequence ID" value="ABB67438.1"/>
    <property type="molecule type" value="Genomic_DNA"/>
</dbReference>
<dbReference type="RefSeq" id="WP_001264365.1">
    <property type="nucleotide sequence ID" value="NC_007613.1"/>
</dbReference>
<dbReference type="SMR" id="Q31WX0"/>
<dbReference type="GeneID" id="93778929"/>
<dbReference type="KEGG" id="sbo:SBO_2922"/>
<dbReference type="HOGENOM" id="CLU_023208_0_2_6"/>
<dbReference type="Proteomes" id="UP000007067">
    <property type="component" value="Chromosome"/>
</dbReference>
<dbReference type="GO" id="GO:0005737">
    <property type="term" value="C:cytoplasm"/>
    <property type="evidence" value="ECO:0007669"/>
    <property type="project" value="UniProtKB-SubCell"/>
</dbReference>
<dbReference type="GO" id="GO:0005506">
    <property type="term" value="F:iron ion binding"/>
    <property type="evidence" value="ECO:0007669"/>
    <property type="project" value="UniProtKB-UniRule"/>
</dbReference>
<dbReference type="GO" id="GO:0061711">
    <property type="term" value="F:N(6)-L-threonylcarbamoyladenine synthase activity"/>
    <property type="evidence" value="ECO:0007669"/>
    <property type="project" value="UniProtKB-EC"/>
</dbReference>
<dbReference type="GO" id="GO:0002949">
    <property type="term" value="P:tRNA threonylcarbamoyladenosine modification"/>
    <property type="evidence" value="ECO:0007669"/>
    <property type="project" value="UniProtKB-UniRule"/>
</dbReference>
<dbReference type="CDD" id="cd24097">
    <property type="entry name" value="ASKHA_NBD_TsaD-like"/>
    <property type="match status" value="1"/>
</dbReference>
<dbReference type="FunFam" id="3.30.420.40:FF:000031">
    <property type="entry name" value="tRNA N6-adenosine threonylcarbamoyltransferase"/>
    <property type="match status" value="1"/>
</dbReference>
<dbReference type="Gene3D" id="3.30.420.40">
    <property type="match status" value="2"/>
</dbReference>
<dbReference type="HAMAP" id="MF_01445">
    <property type="entry name" value="TsaD"/>
    <property type="match status" value="1"/>
</dbReference>
<dbReference type="InterPro" id="IPR043129">
    <property type="entry name" value="ATPase_NBD"/>
</dbReference>
<dbReference type="InterPro" id="IPR000905">
    <property type="entry name" value="Gcp-like_dom"/>
</dbReference>
<dbReference type="InterPro" id="IPR017861">
    <property type="entry name" value="KAE1/TsaD"/>
</dbReference>
<dbReference type="InterPro" id="IPR017860">
    <property type="entry name" value="Peptidase_M22_CS"/>
</dbReference>
<dbReference type="InterPro" id="IPR022450">
    <property type="entry name" value="TsaD"/>
</dbReference>
<dbReference type="NCBIfam" id="TIGR00329">
    <property type="entry name" value="gcp_kae1"/>
    <property type="match status" value="1"/>
</dbReference>
<dbReference type="NCBIfam" id="TIGR03723">
    <property type="entry name" value="T6A_TsaD_YgjD"/>
    <property type="match status" value="1"/>
</dbReference>
<dbReference type="PANTHER" id="PTHR11735">
    <property type="entry name" value="TRNA N6-ADENOSINE THREONYLCARBAMOYLTRANSFERASE"/>
    <property type="match status" value="1"/>
</dbReference>
<dbReference type="PANTHER" id="PTHR11735:SF6">
    <property type="entry name" value="TRNA N6-ADENOSINE THREONYLCARBAMOYLTRANSFERASE, MITOCHONDRIAL"/>
    <property type="match status" value="1"/>
</dbReference>
<dbReference type="Pfam" id="PF00814">
    <property type="entry name" value="TsaD"/>
    <property type="match status" value="1"/>
</dbReference>
<dbReference type="PRINTS" id="PR00789">
    <property type="entry name" value="OSIALOPTASE"/>
</dbReference>
<dbReference type="SUPFAM" id="SSF53067">
    <property type="entry name" value="Actin-like ATPase domain"/>
    <property type="match status" value="1"/>
</dbReference>
<dbReference type="PROSITE" id="PS01016">
    <property type="entry name" value="GLYCOPROTEASE"/>
    <property type="match status" value="1"/>
</dbReference>
<proteinExistence type="inferred from homology"/>
<organism>
    <name type="scientific">Shigella boydii serotype 4 (strain Sb227)</name>
    <dbReference type="NCBI Taxonomy" id="300268"/>
    <lineage>
        <taxon>Bacteria</taxon>
        <taxon>Pseudomonadati</taxon>
        <taxon>Pseudomonadota</taxon>
        <taxon>Gammaproteobacteria</taxon>
        <taxon>Enterobacterales</taxon>
        <taxon>Enterobacteriaceae</taxon>
        <taxon>Shigella</taxon>
    </lineage>
</organism>
<name>TSAD_SHIBS</name>
<sequence>MRVLGIETSCDETGIAIYDDEKGLLANQLYSQVKLHADYGGVVPELASRDHVRKTVPLIQAALKESGLTAKDIDAVAYTAGPGLVGALLVGATVGRSLAFAWNVPAIPVHHMEGHLLAPMLEDNPPEFPFVALLVSGGHTQLISVTGIGQYELLGESIDDAAGEAFDKTAKLLGLDYPGGPLLSKMAAQGTAGRFVFPRPMTDRPGLDFSFSGLKTFAANTIRDNGTDDQTRADIARAFEDAVVDTLMIKCKRALDQTGFKRLVMAGGVSANRTLRAKLAEMMKKRRGEVFYARPEFCTDNGAMIAYAGMVRFKAGATADLGVSVRPRWPLAELPAA</sequence>
<gene>
    <name evidence="1" type="primary">tsaD</name>
    <name type="synonym">gcp</name>
    <name type="ordered locus">SBO_2922</name>
</gene>
<protein>
    <recommendedName>
        <fullName evidence="1">tRNA N6-adenosine threonylcarbamoyltransferase</fullName>
        <ecNumber evidence="1">2.3.1.234</ecNumber>
    </recommendedName>
    <alternativeName>
        <fullName evidence="1">N6-L-threonylcarbamoyladenine synthase</fullName>
        <shortName evidence="1">t(6)A synthase</shortName>
    </alternativeName>
    <alternativeName>
        <fullName evidence="1">t(6)A37 threonylcarbamoyladenosine biosynthesis protein TsaD</fullName>
    </alternativeName>
    <alternativeName>
        <fullName evidence="1">tRNA threonylcarbamoyladenosine biosynthesis protein TsaD</fullName>
    </alternativeName>
</protein>
<keyword id="KW-0012">Acyltransferase</keyword>
<keyword id="KW-0963">Cytoplasm</keyword>
<keyword id="KW-0408">Iron</keyword>
<keyword id="KW-0479">Metal-binding</keyword>
<keyword id="KW-0808">Transferase</keyword>
<keyword id="KW-0819">tRNA processing</keyword>
<evidence type="ECO:0000255" key="1">
    <source>
        <dbReference type="HAMAP-Rule" id="MF_01445"/>
    </source>
</evidence>
<reference key="1">
    <citation type="journal article" date="2005" name="Nucleic Acids Res.">
        <title>Genome dynamics and diversity of Shigella species, the etiologic agents of bacillary dysentery.</title>
        <authorList>
            <person name="Yang F."/>
            <person name="Yang J."/>
            <person name="Zhang X."/>
            <person name="Chen L."/>
            <person name="Jiang Y."/>
            <person name="Yan Y."/>
            <person name="Tang X."/>
            <person name="Wang J."/>
            <person name="Xiong Z."/>
            <person name="Dong J."/>
            <person name="Xue Y."/>
            <person name="Zhu Y."/>
            <person name="Xu X."/>
            <person name="Sun L."/>
            <person name="Chen S."/>
            <person name="Nie H."/>
            <person name="Peng J."/>
            <person name="Xu J."/>
            <person name="Wang Y."/>
            <person name="Yuan Z."/>
            <person name="Wen Y."/>
            <person name="Yao Z."/>
            <person name="Shen Y."/>
            <person name="Qiang B."/>
            <person name="Hou Y."/>
            <person name="Yu J."/>
            <person name="Jin Q."/>
        </authorList>
    </citation>
    <scope>NUCLEOTIDE SEQUENCE [LARGE SCALE GENOMIC DNA]</scope>
    <source>
        <strain>Sb227</strain>
    </source>
</reference>
<feature type="chain" id="PRO_1000024454" description="tRNA N6-adenosine threonylcarbamoyltransferase">
    <location>
        <begin position="1"/>
        <end position="337"/>
    </location>
</feature>
<feature type="binding site" evidence="1">
    <location>
        <position position="111"/>
    </location>
    <ligand>
        <name>Fe cation</name>
        <dbReference type="ChEBI" id="CHEBI:24875"/>
    </ligand>
</feature>
<feature type="binding site" evidence="1">
    <location>
        <position position="115"/>
    </location>
    <ligand>
        <name>Fe cation</name>
        <dbReference type="ChEBI" id="CHEBI:24875"/>
    </ligand>
</feature>
<feature type="binding site" evidence="1">
    <location>
        <begin position="134"/>
        <end position="138"/>
    </location>
    <ligand>
        <name>substrate</name>
    </ligand>
</feature>
<feature type="binding site" evidence="1">
    <location>
        <position position="167"/>
    </location>
    <ligand>
        <name>substrate</name>
    </ligand>
</feature>
<feature type="binding site" evidence="1">
    <location>
        <position position="180"/>
    </location>
    <ligand>
        <name>substrate</name>
    </ligand>
</feature>
<feature type="binding site" evidence="1">
    <location>
        <position position="272"/>
    </location>
    <ligand>
        <name>substrate</name>
    </ligand>
</feature>
<feature type="binding site" evidence="1">
    <location>
        <position position="300"/>
    </location>
    <ligand>
        <name>Fe cation</name>
        <dbReference type="ChEBI" id="CHEBI:24875"/>
    </ligand>
</feature>
<comment type="function">
    <text evidence="1">Required for the formation of a threonylcarbamoyl group on adenosine at position 37 (t(6)A37) in tRNAs that read codons beginning with adenine. Is involved in the transfer of the threonylcarbamoyl moiety of threonylcarbamoyl-AMP (TC-AMP) to the N6 group of A37, together with TsaE and TsaB. TsaD likely plays a direct catalytic role in this reaction.</text>
</comment>
<comment type="catalytic activity">
    <reaction evidence="1">
        <text>L-threonylcarbamoyladenylate + adenosine(37) in tRNA = N(6)-L-threonylcarbamoyladenosine(37) in tRNA + AMP + H(+)</text>
        <dbReference type="Rhea" id="RHEA:37059"/>
        <dbReference type="Rhea" id="RHEA-COMP:10162"/>
        <dbReference type="Rhea" id="RHEA-COMP:10163"/>
        <dbReference type="ChEBI" id="CHEBI:15378"/>
        <dbReference type="ChEBI" id="CHEBI:73682"/>
        <dbReference type="ChEBI" id="CHEBI:74411"/>
        <dbReference type="ChEBI" id="CHEBI:74418"/>
        <dbReference type="ChEBI" id="CHEBI:456215"/>
        <dbReference type="EC" id="2.3.1.234"/>
    </reaction>
</comment>
<comment type="cofactor">
    <cofactor evidence="1">
        <name>Fe(2+)</name>
        <dbReference type="ChEBI" id="CHEBI:29033"/>
    </cofactor>
    <text evidence="1">Binds 1 Fe(2+) ion per subunit.</text>
</comment>
<comment type="subcellular location">
    <subcellularLocation>
        <location evidence="1">Cytoplasm</location>
    </subcellularLocation>
</comment>
<comment type="similarity">
    <text evidence="1">Belongs to the KAE1 / TsaD family.</text>
</comment>
<accession>Q31WX0</accession>